<feature type="chain" id="PRO_1000142789" description="Large ribosomal subunit protein uL15">
    <location>
        <begin position="1"/>
        <end position="184"/>
    </location>
</feature>
<feature type="region of interest" description="Disordered" evidence="2">
    <location>
        <begin position="1"/>
        <end position="62"/>
    </location>
</feature>
<feature type="compositionally biased region" description="Gly residues" evidence="2">
    <location>
        <begin position="21"/>
        <end position="35"/>
    </location>
</feature>
<comment type="function">
    <text evidence="1">Binds to the 23S rRNA.</text>
</comment>
<comment type="subunit">
    <text evidence="1">Part of the 50S ribosomal subunit.</text>
</comment>
<comment type="similarity">
    <text evidence="1">Belongs to the universal ribosomal protein uL15 family.</text>
</comment>
<evidence type="ECO:0000255" key="1">
    <source>
        <dbReference type="HAMAP-Rule" id="MF_01341"/>
    </source>
</evidence>
<evidence type="ECO:0000256" key="2">
    <source>
        <dbReference type="SAM" id="MobiDB-lite"/>
    </source>
</evidence>
<evidence type="ECO:0000305" key="3"/>
<name>RL15_CHLP8</name>
<proteinExistence type="inferred from homology"/>
<dbReference type="EMBL" id="CP001099">
    <property type="protein sequence ID" value="ACF10623.1"/>
    <property type="molecule type" value="Genomic_DNA"/>
</dbReference>
<dbReference type="RefSeq" id="WP_012501458.1">
    <property type="nucleotide sequence ID" value="NC_011027.1"/>
</dbReference>
<dbReference type="SMR" id="B3QR90"/>
<dbReference type="STRING" id="517417.Cpar_0196"/>
<dbReference type="KEGG" id="cpc:Cpar_0196"/>
<dbReference type="eggNOG" id="COG0200">
    <property type="taxonomic scope" value="Bacteria"/>
</dbReference>
<dbReference type="HOGENOM" id="CLU_055188_4_0_10"/>
<dbReference type="OrthoDB" id="9810293at2"/>
<dbReference type="Proteomes" id="UP000008811">
    <property type="component" value="Chromosome"/>
</dbReference>
<dbReference type="GO" id="GO:0022625">
    <property type="term" value="C:cytosolic large ribosomal subunit"/>
    <property type="evidence" value="ECO:0007669"/>
    <property type="project" value="TreeGrafter"/>
</dbReference>
<dbReference type="GO" id="GO:0019843">
    <property type="term" value="F:rRNA binding"/>
    <property type="evidence" value="ECO:0007669"/>
    <property type="project" value="UniProtKB-UniRule"/>
</dbReference>
<dbReference type="GO" id="GO:0003735">
    <property type="term" value="F:structural constituent of ribosome"/>
    <property type="evidence" value="ECO:0007669"/>
    <property type="project" value="InterPro"/>
</dbReference>
<dbReference type="GO" id="GO:0006412">
    <property type="term" value="P:translation"/>
    <property type="evidence" value="ECO:0007669"/>
    <property type="project" value="UniProtKB-UniRule"/>
</dbReference>
<dbReference type="Gene3D" id="3.100.10.10">
    <property type="match status" value="1"/>
</dbReference>
<dbReference type="HAMAP" id="MF_01341">
    <property type="entry name" value="Ribosomal_uL15"/>
    <property type="match status" value="1"/>
</dbReference>
<dbReference type="InterPro" id="IPR030878">
    <property type="entry name" value="Ribosomal_uL15"/>
</dbReference>
<dbReference type="InterPro" id="IPR021131">
    <property type="entry name" value="Ribosomal_uL15/eL18"/>
</dbReference>
<dbReference type="InterPro" id="IPR036227">
    <property type="entry name" value="Ribosomal_uL15/eL18_sf"/>
</dbReference>
<dbReference type="InterPro" id="IPR005749">
    <property type="entry name" value="Ribosomal_uL15_bac-type"/>
</dbReference>
<dbReference type="NCBIfam" id="TIGR01071">
    <property type="entry name" value="rplO_bact"/>
    <property type="match status" value="1"/>
</dbReference>
<dbReference type="PANTHER" id="PTHR12934">
    <property type="entry name" value="50S RIBOSOMAL PROTEIN L15"/>
    <property type="match status" value="1"/>
</dbReference>
<dbReference type="PANTHER" id="PTHR12934:SF11">
    <property type="entry name" value="LARGE RIBOSOMAL SUBUNIT PROTEIN UL15M"/>
    <property type="match status" value="1"/>
</dbReference>
<dbReference type="Pfam" id="PF00828">
    <property type="entry name" value="Ribosomal_L27A"/>
    <property type="match status" value="1"/>
</dbReference>
<dbReference type="SUPFAM" id="SSF52080">
    <property type="entry name" value="Ribosomal proteins L15p and L18e"/>
    <property type="match status" value="1"/>
</dbReference>
<accession>B3QR90</accession>
<sequence>MDLSSLRPAKGAVKGRKRVGRGPGSGNGTTAGKGNKGQQSRSGYTRPVTEGGQMPMYRRLPKFGFTPPNKKSVACVNLAQIQMWIEKGLVGEEISVLDLKHLCNASNQDYFKILGNGEFESAVTITAHFFSKSAVEKIEKAGGKTVTAYRTLEEASKVNGLPFEEALLTPKAPVLKKKKKSDKS</sequence>
<keyword id="KW-0687">Ribonucleoprotein</keyword>
<keyword id="KW-0689">Ribosomal protein</keyword>
<keyword id="KW-0694">RNA-binding</keyword>
<keyword id="KW-0699">rRNA-binding</keyword>
<protein>
    <recommendedName>
        <fullName evidence="1">Large ribosomal subunit protein uL15</fullName>
    </recommendedName>
    <alternativeName>
        <fullName evidence="3">50S ribosomal protein L15</fullName>
    </alternativeName>
</protein>
<organism>
    <name type="scientific">Chlorobaculum parvum (strain DSM 263 / NCIMB 8327)</name>
    <name type="common">Chlorobium vibrioforme subsp. thiosulfatophilum</name>
    <dbReference type="NCBI Taxonomy" id="517417"/>
    <lineage>
        <taxon>Bacteria</taxon>
        <taxon>Pseudomonadati</taxon>
        <taxon>Chlorobiota</taxon>
        <taxon>Chlorobiia</taxon>
        <taxon>Chlorobiales</taxon>
        <taxon>Chlorobiaceae</taxon>
        <taxon>Chlorobaculum</taxon>
    </lineage>
</organism>
<reference key="1">
    <citation type="submission" date="2008-06" db="EMBL/GenBank/DDBJ databases">
        <title>Complete sequence of Chlorobaculum parvum NCIB 8327.</title>
        <authorList>
            <consortium name="US DOE Joint Genome Institute"/>
            <person name="Lucas S."/>
            <person name="Copeland A."/>
            <person name="Lapidus A."/>
            <person name="Glavina del Rio T."/>
            <person name="Dalin E."/>
            <person name="Tice H."/>
            <person name="Bruce D."/>
            <person name="Goodwin L."/>
            <person name="Pitluck S."/>
            <person name="Schmutz J."/>
            <person name="Larimer F."/>
            <person name="Land M."/>
            <person name="Hauser L."/>
            <person name="Kyrpides N."/>
            <person name="Mikhailova N."/>
            <person name="Zhao F."/>
            <person name="Li T."/>
            <person name="Liu Z."/>
            <person name="Overmann J."/>
            <person name="Bryant D.A."/>
            <person name="Richardson P."/>
        </authorList>
    </citation>
    <scope>NUCLEOTIDE SEQUENCE [LARGE SCALE GENOMIC DNA]</scope>
    <source>
        <strain>DSM 263 / NCIMB 8327</strain>
    </source>
</reference>
<gene>
    <name evidence="1" type="primary">rplO</name>
    <name type="ordered locus">Cpar_0196</name>
</gene>